<feature type="chain" id="PRO_1000075752" description="Ribonuclease 3">
    <location>
        <begin position="1"/>
        <end position="226"/>
    </location>
</feature>
<feature type="domain" description="RNase III" evidence="1">
    <location>
        <begin position="6"/>
        <end position="128"/>
    </location>
</feature>
<feature type="domain" description="DRBM" evidence="1">
    <location>
        <begin position="155"/>
        <end position="225"/>
    </location>
</feature>
<feature type="active site" evidence="1">
    <location>
        <position position="45"/>
    </location>
</feature>
<feature type="active site" evidence="1">
    <location>
        <position position="117"/>
    </location>
</feature>
<feature type="binding site" evidence="1">
    <location>
        <position position="41"/>
    </location>
    <ligand>
        <name>Mg(2+)</name>
        <dbReference type="ChEBI" id="CHEBI:18420"/>
    </ligand>
</feature>
<feature type="binding site" evidence="1">
    <location>
        <position position="114"/>
    </location>
    <ligand>
        <name>Mg(2+)</name>
        <dbReference type="ChEBI" id="CHEBI:18420"/>
    </ligand>
</feature>
<feature type="binding site" evidence="1">
    <location>
        <position position="117"/>
    </location>
    <ligand>
        <name>Mg(2+)</name>
        <dbReference type="ChEBI" id="CHEBI:18420"/>
    </ligand>
</feature>
<protein>
    <recommendedName>
        <fullName evidence="1">Ribonuclease 3</fullName>
        <ecNumber evidence="1">3.1.26.3</ecNumber>
    </recommendedName>
    <alternativeName>
        <fullName evidence="1">Ribonuclease III</fullName>
        <shortName evidence="1">RNase III</shortName>
    </alternativeName>
</protein>
<name>RNC_ENT38</name>
<accession>A4WDD8</accession>
<reference key="1">
    <citation type="journal article" date="2010" name="PLoS Genet.">
        <title>Genome sequence of the plant growth promoting endophytic bacterium Enterobacter sp. 638.</title>
        <authorList>
            <person name="Taghavi S."/>
            <person name="van der Lelie D."/>
            <person name="Hoffman A."/>
            <person name="Zhang Y.B."/>
            <person name="Walla M.D."/>
            <person name="Vangronsveld J."/>
            <person name="Newman L."/>
            <person name="Monchy S."/>
        </authorList>
    </citation>
    <scope>NUCLEOTIDE SEQUENCE [LARGE SCALE GENOMIC DNA]</scope>
    <source>
        <strain>638</strain>
    </source>
</reference>
<comment type="function">
    <text evidence="1">Digests double-stranded RNA. Involved in the processing of primary rRNA transcript to yield the immediate precursors to the large and small rRNAs (23S and 16S). Processes some mRNAs, and tRNAs when they are encoded in the rRNA operon. Processes pre-crRNA and tracrRNA of type II CRISPR loci if present in the organism.</text>
</comment>
<comment type="catalytic activity">
    <reaction evidence="1">
        <text>Endonucleolytic cleavage to 5'-phosphomonoester.</text>
        <dbReference type="EC" id="3.1.26.3"/>
    </reaction>
</comment>
<comment type="cofactor">
    <cofactor evidence="1">
        <name>Mg(2+)</name>
        <dbReference type="ChEBI" id="CHEBI:18420"/>
    </cofactor>
</comment>
<comment type="subunit">
    <text evidence="1">Homodimer.</text>
</comment>
<comment type="subcellular location">
    <subcellularLocation>
        <location evidence="1">Cytoplasm</location>
    </subcellularLocation>
</comment>
<comment type="similarity">
    <text evidence="1">Belongs to the ribonuclease III family.</text>
</comment>
<sequence length="226" mass="25562">MNPIVINRLQRKLGYTFQHHELLQQALTHRSASSKHNERLEFLGDSILSYVIANALYHRFPRVDEGDMSRMRATLVRGNTLAEIAREFELGECLRLGPGELKSGGFRRESILADTVEALIGGVFLDSDIQTVEQLILNWYQTRLDEISPGDKQKDPKTRLQEYLQGRHLPLPSYLVVQVRGEAHDQEFTIHCQVSGLSEPVVGTGSSRRKAEQAAAEQALKMLELE</sequence>
<proteinExistence type="inferred from homology"/>
<evidence type="ECO:0000255" key="1">
    <source>
        <dbReference type="HAMAP-Rule" id="MF_00104"/>
    </source>
</evidence>
<organism>
    <name type="scientific">Enterobacter sp. (strain 638)</name>
    <dbReference type="NCBI Taxonomy" id="399742"/>
    <lineage>
        <taxon>Bacteria</taxon>
        <taxon>Pseudomonadati</taxon>
        <taxon>Pseudomonadota</taxon>
        <taxon>Gammaproteobacteria</taxon>
        <taxon>Enterobacterales</taxon>
        <taxon>Enterobacteriaceae</taxon>
        <taxon>Enterobacter</taxon>
    </lineage>
</organism>
<dbReference type="EC" id="3.1.26.3" evidence="1"/>
<dbReference type="EMBL" id="CP000653">
    <property type="protein sequence ID" value="ABP61718.1"/>
    <property type="molecule type" value="Genomic_DNA"/>
</dbReference>
<dbReference type="RefSeq" id="WP_015960048.1">
    <property type="nucleotide sequence ID" value="NC_009436.1"/>
</dbReference>
<dbReference type="SMR" id="A4WDD8"/>
<dbReference type="STRING" id="399742.Ent638_3054"/>
<dbReference type="GeneID" id="93305995"/>
<dbReference type="KEGG" id="ent:Ent638_3054"/>
<dbReference type="eggNOG" id="COG0571">
    <property type="taxonomic scope" value="Bacteria"/>
</dbReference>
<dbReference type="HOGENOM" id="CLU_000907_1_1_6"/>
<dbReference type="OrthoDB" id="9805026at2"/>
<dbReference type="Proteomes" id="UP000000230">
    <property type="component" value="Chromosome"/>
</dbReference>
<dbReference type="GO" id="GO:0005737">
    <property type="term" value="C:cytoplasm"/>
    <property type="evidence" value="ECO:0007669"/>
    <property type="project" value="UniProtKB-SubCell"/>
</dbReference>
<dbReference type="GO" id="GO:0003725">
    <property type="term" value="F:double-stranded RNA binding"/>
    <property type="evidence" value="ECO:0007669"/>
    <property type="project" value="TreeGrafter"/>
</dbReference>
<dbReference type="GO" id="GO:0046872">
    <property type="term" value="F:metal ion binding"/>
    <property type="evidence" value="ECO:0007669"/>
    <property type="project" value="UniProtKB-KW"/>
</dbReference>
<dbReference type="GO" id="GO:0004525">
    <property type="term" value="F:ribonuclease III activity"/>
    <property type="evidence" value="ECO:0007669"/>
    <property type="project" value="UniProtKB-UniRule"/>
</dbReference>
<dbReference type="GO" id="GO:0019843">
    <property type="term" value="F:rRNA binding"/>
    <property type="evidence" value="ECO:0007669"/>
    <property type="project" value="UniProtKB-KW"/>
</dbReference>
<dbReference type="GO" id="GO:0006397">
    <property type="term" value="P:mRNA processing"/>
    <property type="evidence" value="ECO:0007669"/>
    <property type="project" value="UniProtKB-UniRule"/>
</dbReference>
<dbReference type="GO" id="GO:0010468">
    <property type="term" value="P:regulation of gene expression"/>
    <property type="evidence" value="ECO:0007669"/>
    <property type="project" value="TreeGrafter"/>
</dbReference>
<dbReference type="GO" id="GO:0006364">
    <property type="term" value="P:rRNA processing"/>
    <property type="evidence" value="ECO:0007669"/>
    <property type="project" value="UniProtKB-UniRule"/>
</dbReference>
<dbReference type="GO" id="GO:0008033">
    <property type="term" value="P:tRNA processing"/>
    <property type="evidence" value="ECO:0007669"/>
    <property type="project" value="UniProtKB-KW"/>
</dbReference>
<dbReference type="CDD" id="cd10845">
    <property type="entry name" value="DSRM_RNAse_III_family"/>
    <property type="match status" value="1"/>
</dbReference>
<dbReference type="CDD" id="cd00593">
    <property type="entry name" value="RIBOc"/>
    <property type="match status" value="1"/>
</dbReference>
<dbReference type="FunFam" id="1.10.1520.10:FF:000001">
    <property type="entry name" value="Ribonuclease 3"/>
    <property type="match status" value="1"/>
</dbReference>
<dbReference type="FunFam" id="3.30.160.20:FF:000003">
    <property type="entry name" value="Ribonuclease 3"/>
    <property type="match status" value="1"/>
</dbReference>
<dbReference type="Gene3D" id="3.30.160.20">
    <property type="match status" value="1"/>
</dbReference>
<dbReference type="Gene3D" id="1.10.1520.10">
    <property type="entry name" value="Ribonuclease III domain"/>
    <property type="match status" value="1"/>
</dbReference>
<dbReference type="HAMAP" id="MF_00104">
    <property type="entry name" value="RNase_III"/>
    <property type="match status" value="1"/>
</dbReference>
<dbReference type="InterPro" id="IPR014720">
    <property type="entry name" value="dsRBD_dom"/>
</dbReference>
<dbReference type="InterPro" id="IPR011907">
    <property type="entry name" value="RNase_III"/>
</dbReference>
<dbReference type="InterPro" id="IPR000999">
    <property type="entry name" value="RNase_III_dom"/>
</dbReference>
<dbReference type="InterPro" id="IPR036389">
    <property type="entry name" value="RNase_III_sf"/>
</dbReference>
<dbReference type="NCBIfam" id="TIGR02191">
    <property type="entry name" value="RNaseIII"/>
    <property type="match status" value="1"/>
</dbReference>
<dbReference type="PANTHER" id="PTHR11207:SF0">
    <property type="entry name" value="RIBONUCLEASE 3"/>
    <property type="match status" value="1"/>
</dbReference>
<dbReference type="PANTHER" id="PTHR11207">
    <property type="entry name" value="RIBONUCLEASE III"/>
    <property type="match status" value="1"/>
</dbReference>
<dbReference type="Pfam" id="PF00035">
    <property type="entry name" value="dsrm"/>
    <property type="match status" value="1"/>
</dbReference>
<dbReference type="Pfam" id="PF14622">
    <property type="entry name" value="Ribonucleas_3_3"/>
    <property type="match status" value="1"/>
</dbReference>
<dbReference type="SMART" id="SM00358">
    <property type="entry name" value="DSRM"/>
    <property type="match status" value="1"/>
</dbReference>
<dbReference type="SMART" id="SM00535">
    <property type="entry name" value="RIBOc"/>
    <property type="match status" value="1"/>
</dbReference>
<dbReference type="SUPFAM" id="SSF54768">
    <property type="entry name" value="dsRNA-binding domain-like"/>
    <property type="match status" value="1"/>
</dbReference>
<dbReference type="SUPFAM" id="SSF69065">
    <property type="entry name" value="RNase III domain-like"/>
    <property type="match status" value="1"/>
</dbReference>
<dbReference type="PROSITE" id="PS50137">
    <property type="entry name" value="DS_RBD"/>
    <property type="match status" value="1"/>
</dbReference>
<dbReference type="PROSITE" id="PS00517">
    <property type="entry name" value="RNASE_3_1"/>
    <property type="match status" value="1"/>
</dbReference>
<dbReference type="PROSITE" id="PS50142">
    <property type="entry name" value="RNASE_3_2"/>
    <property type="match status" value="1"/>
</dbReference>
<keyword id="KW-0963">Cytoplasm</keyword>
<keyword id="KW-0255">Endonuclease</keyword>
<keyword id="KW-0378">Hydrolase</keyword>
<keyword id="KW-0460">Magnesium</keyword>
<keyword id="KW-0479">Metal-binding</keyword>
<keyword id="KW-0507">mRNA processing</keyword>
<keyword id="KW-0540">Nuclease</keyword>
<keyword id="KW-0694">RNA-binding</keyword>
<keyword id="KW-0698">rRNA processing</keyword>
<keyword id="KW-0699">rRNA-binding</keyword>
<keyword id="KW-0819">tRNA processing</keyword>
<gene>
    <name evidence="1" type="primary">rnc</name>
    <name type="ordered locus">Ent638_3054</name>
</gene>